<dbReference type="EMBL" id="AK088648">
    <property type="protein sequence ID" value="BAC40476.1"/>
    <property type="status" value="ALT_SEQ"/>
    <property type="molecule type" value="mRNA"/>
</dbReference>
<dbReference type="EMBL" id="Y15910">
    <property type="protein sequence ID" value="CAA75871.1"/>
    <property type="molecule type" value="mRNA"/>
</dbReference>
<dbReference type="RefSeq" id="XP_006528645.1">
    <property type="nucleotide sequence ID" value="XM_006528582.5"/>
</dbReference>
<dbReference type="SMR" id="O70566"/>
<dbReference type="BioGRID" id="207557">
    <property type="interactions" value="13"/>
</dbReference>
<dbReference type="FunCoup" id="O70566">
    <property type="interactions" value="1627"/>
</dbReference>
<dbReference type="IntAct" id="O70566">
    <property type="interactions" value="2"/>
</dbReference>
<dbReference type="STRING" id="10090.ENSMUSP00000039334"/>
<dbReference type="GlyGen" id="O70566">
    <property type="glycosylation" value="2 sites, 2 N-linked glycans (2 sites)"/>
</dbReference>
<dbReference type="iPTMnet" id="O70566"/>
<dbReference type="PhosphoSitePlus" id="O70566"/>
<dbReference type="PaxDb" id="10090-ENSMUSP00000039334"/>
<dbReference type="ProteomicsDB" id="279539"/>
<dbReference type="Pumba" id="O70566"/>
<dbReference type="Antibodypedia" id="471">
    <property type="antibodies" value="279 antibodies from 34 providers"/>
</dbReference>
<dbReference type="DNASU" id="54004"/>
<dbReference type="Ensembl" id="ENSMUST00000113320.3">
    <property type="protein sequence ID" value="ENSMUSP00000108946.3"/>
    <property type="gene ID" value="ENSMUSG00000034480.20"/>
</dbReference>
<dbReference type="GeneID" id="54004"/>
<dbReference type="AGR" id="MGI:1858500"/>
<dbReference type="CTD" id="1730"/>
<dbReference type="MGI" id="MGI:1858500">
    <property type="gene designation" value="Diaph2"/>
</dbReference>
<dbReference type="VEuPathDB" id="HostDB:ENSMUSG00000034480"/>
<dbReference type="eggNOG" id="KOG1924">
    <property type="taxonomic scope" value="Eukaryota"/>
</dbReference>
<dbReference type="GeneTree" id="ENSGT00940000157822"/>
<dbReference type="HOGENOM" id="CLU_002356_0_0_1"/>
<dbReference type="InParanoid" id="O70566"/>
<dbReference type="OrthoDB" id="1104827at2759"/>
<dbReference type="PhylomeDB" id="O70566"/>
<dbReference type="Reactome" id="R-MMU-5663220">
    <property type="pathway name" value="RHO GTPases Activate Formins"/>
</dbReference>
<dbReference type="Reactome" id="R-MMU-9013405">
    <property type="pathway name" value="RHOD GTPase cycle"/>
</dbReference>
<dbReference type="Reactome" id="R-MMU-9035034">
    <property type="pathway name" value="RHOF GTPase cycle"/>
</dbReference>
<dbReference type="BioGRID-ORCS" id="54004">
    <property type="hits" value="3 hits in 42 CRISPR screens"/>
</dbReference>
<dbReference type="ChiTaRS" id="Diaph2">
    <property type="organism name" value="mouse"/>
</dbReference>
<dbReference type="PRO" id="PR:O70566"/>
<dbReference type="Proteomes" id="UP000000589">
    <property type="component" value="Chromosome X"/>
</dbReference>
<dbReference type="RNAct" id="O70566">
    <property type="molecule type" value="protein"/>
</dbReference>
<dbReference type="Bgee" id="ENSMUSG00000034480">
    <property type="expression patterns" value="Expressed in olfactory tubercle and 234 other cell types or tissues"/>
</dbReference>
<dbReference type="ExpressionAtlas" id="O70566">
    <property type="expression patterns" value="baseline and differential"/>
</dbReference>
<dbReference type="GO" id="GO:0003779">
    <property type="term" value="F:actin binding"/>
    <property type="evidence" value="ECO:0000314"/>
    <property type="project" value="MGI"/>
</dbReference>
<dbReference type="GO" id="GO:0031267">
    <property type="term" value="F:small GTPase binding"/>
    <property type="evidence" value="ECO:0007669"/>
    <property type="project" value="InterPro"/>
</dbReference>
<dbReference type="GO" id="GO:0030041">
    <property type="term" value="P:actin filament polymerization"/>
    <property type="evidence" value="ECO:0000314"/>
    <property type="project" value="MGI"/>
</dbReference>
<dbReference type="GO" id="GO:0016199">
    <property type="term" value="P:axon midline choice point recognition"/>
    <property type="evidence" value="ECO:0000316"/>
    <property type="project" value="MGI"/>
</dbReference>
<dbReference type="GO" id="GO:0048013">
    <property type="term" value="P:ephrin receptor signaling pathway"/>
    <property type="evidence" value="ECO:0000316"/>
    <property type="project" value="MGI"/>
</dbReference>
<dbReference type="GO" id="GO:0071965">
    <property type="term" value="P:multicellular organismal locomotion"/>
    <property type="evidence" value="ECO:0000316"/>
    <property type="project" value="MGI"/>
</dbReference>
<dbReference type="GO" id="GO:0070571">
    <property type="term" value="P:negative regulation of neuron projection regeneration"/>
    <property type="evidence" value="ECO:0000316"/>
    <property type="project" value="MGI"/>
</dbReference>
<dbReference type="GO" id="GO:0106028">
    <property type="term" value="P:neuron projection retraction"/>
    <property type="evidence" value="ECO:0000316"/>
    <property type="project" value="MGI"/>
</dbReference>
<dbReference type="GO" id="GO:0048477">
    <property type="term" value="P:oogenesis"/>
    <property type="evidence" value="ECO:0007669"/>
    <property type="project" value="UniProtKB-KW"/>
</dbReference>
<dbReference type="GO" id="GO:0008104">
    <property type="term" value="P:protein localization"/>
    <property type="evidence" value="ECO:0000316"/>
    <property type="project" value="MGI"/>
</dbReference>
<dbReference type="FunFam" id="1.20.58.630:FF:000001">
    <property type="entry name" value="Diaphanous related formin 1"/>
    <property type="match status" value="1"/>
</dbReference>
<dbReference type="FunFam" id="1.10.20.40:FF:000001">
    <property type="entry name" value="Diaphanous related formin 2"/>
    <property type="match status" value="1"/>
</dbReference>
<dbReference type="FunFam" id="1.25.10.10:FF:000033">
    <property type="entry name" value="Diaphanous related formin 2"/>
    <property type="match status" value="1"/>
</dbReference>
<dbReference type="FunFam" id="1.20.58.2220:FF:000003">
    <property type="entry name" value="protein diaphanous homolog 1 isoform X2"/>
    <property type="match status" value="1"/>
</dbReference>
<dbReference type="FunFam" id="1.10.238.150:FF:000002">
    <property type="entry name" value="protein diaphanous homolog 2 isoform X2"/>
    <property type="match status" value="1"/>
</dbReference>
<dbReference type="Gene3D" id="1.20.58.630">
    <property type="match status" value="1"/>
</dbReference>
<dbReference type="Gene3D" id="6.10.30.30">
    <property type="match status" value="1"/>
</dbReference>
<dbReference type="Gene3D" id="1.10.20.40">
    <property type="entry name" value="Formin, diaphanous GTPase-binding domain"/>
    <property type="match status" value="1"/>
</dbReference>
<dbReference type="Gene3D" id="1.20.58.2220">
    <property type="entry name" value="Formin, FH2 domain"/>
    <property type="match status" value="1"/>
</dbReference>
<dbReference type="Gene3D" id="1.10.238.150">
    <property type="entry name" value="Formin, FH3 diaphanous domain"/>
    <property type="match status" value="1"/>
</dbReference>
<dbReference type="Gene3D" id="1.25.10.10">
    <property type="entry name" value="Leucine-rich Repeat Variant"/>
    <property type="match status" value="1"/>
</dbReference>
<dbReference type="InterPro" id="IPR011989">
    <property type="entry name" value="ARM-like"/>
</dbReference>
<dbReference type="InterPro" id="IPR016024">
    <property type="entry name" value="ARM-type_fold"/>
</dbReference>
<dbReference type="InterPro" id="IPR014767">
    <property type="entry name" value="DAD_dom"/>
</dbReference>
<dbReference type="InterPro" id="IPR044933">
    <property type="entry name" value="DIA_GBD_sf"/>
</dbReference>
<dbReference type="InterPro" id="IPR015425">
    <property type="entry name" value="FH2_Formin"/>
</dbReference>
<dbReference type="InterPro" id="IPR042201">
    <property type="entry name" value="FH2_Formin_sf"/>
</dbReference>
<dbReference type="InterPro" id="IPR010472">
    <property type="entry name" value="FH3_dom"/>
</dbReference>
<dbReference type="InterPro" id="IPR051412">
    <property type="entry name" value="Formin_Homology_Diaphanous_sf"/>
</dbReference>
<dbReference type="InterPro" id="IPR014768">
    <property type="entry name" value="GBD/FH3_dom"/>
</dbReference>
<dbReference type="InterPro" id="IPR010473">
    <property type="entry name" value="GTPase-bd"/>
</dbReference>
<dbReference type="PANTHER" id="PTHR45691">
    <property type="entry name" value="PROTEIN DIAPHANOUS"/>
    <property type="match status" value="1"/>
</dbReference>
<dbReference type="PANTHER" id="PTHR45691:SF3">
    <property type="entry name" value="PROTEIN DIAPHANOUS HOMOLOG 2"/>
    <property type="match status" value="1"/>
</dbReference>
<dbReference type="Pfam" id="PF06367">
    <property type="entry name" value="Drf_FH3"/>
    <property type="match status" value="1"/>
</dbReference>
<dbReference type="Pfam" id="PF06371">
    <property type="entry name" value="Drf_GBD"/>
    <property type="match status" value="1"/>
</dbReference>
<dbReference type="Pfam" id="PF02181">
    <property type="entry name" value="FH2"/>
    <property type="match status" value="1"/>
</dbReference>
<dbReference type="SMART" id="SM01139">
    <property type="entry name" value="Drf_FH3"/>
    <property type="match status" value="1"/>
</dbReference>
<dbReference type="SMART" id="SM01140">
    <property type="entry name" value="Drf_GBD"/>
    <property type="match status" value="1"/>
</dbReference>
<dbReference type="SMART" id="SM00498">
    <property type="entry name" value="FH2"/>
    <property type="match status" value="1"/>
</dbReference>
<dbReference type="SUPFAM" id="SSF48371">
    <property type="entry name" value="ARM repeat"/>
    <property type="match status" value="1"/>
</dbReference>
<dbReference type="SUPFAM" id="SSF101447">
    <property type="entry name" value="Formin homology 2 domain (FH2 domain)"/>
    <property type="match status" value="1"/>
</dbReference>
<dbReference type="PROSITE" id="PS51231">
    <property type="entry name" value="DAD"/>
    <property type="match status" value="1"/>
</dbReference>
<dbReference type="PROSITE" id="PS51444">
    <property type="entry name" value="FH2"/>
    <property type="match status" value="1"/>
</dbReference>
<dbReference type="PROSITE" id="PS51232">
    <property type="entry name" value="GBD_FH3"/>
    <property type="match status" value="1"/>
</dbReference>
<sequence>MEELGAAASGAGGGGGGGEEHGGGRSNKRGAGNRAANEEETRNKPKLRDRITSFRKSATKREKPVIQHSIDYQTAVVEIPPALIVHDDRSLILSEKEVLDLFEKMMEDMNLNEEKKAPLRKKDFSIKREMVVQYISATSKSIVGSKVLGGLKNSKHEFTLSSQEYVHELRSGISDEKLLNCLESLRVSLTSHPVSWVNNFGYEGLGVLLDVLEKLLDKKQQENIDKKNQYKVIQCLKAFMNNKFGLQRILGDERSLLLLARAIDPKQQNMMTEIVKILSAICIVGEENILDKLLGGITAAAELNNRERFSPIVEGLENNEALHLQVACMQFINALVTSPYDLDFRIHLRNEFLRCGLKAMLPTLKEIENEGLDIQLRVFEENKEDDLSELSHRLNDIRAEMDDINEVYHLLYNMLKDTAAEPYLLSILQHFLLIRNDYYIRPQYYKIIEECVSQIVLHCSGMDPDFKYRQRIDFDFTHLLDACVNKAKVEENEQKAMEFSKKFDEEFTARQEAQAELQKRDEKIKELETEIQQLRGQGVPSAIPGPPPPPPLPGAGPCPPPPPPPPPPPPLPGVVPPPPPPLPGMPGIPPPPPPPLSGVPPPPPPPGGVFPLLSGPIELPYGMKQKKLYKPDIPMKRINWSKIEPKELSENCVWLKLKEEKYENADLFAKLALTFPSQMKGQRNTEAAEENRSGPPKKKVKELRILDTKTAQNLSIFLGSYRMPYEEIKNIILEVNEEMLSEALIQNLVKYLPDQNALRELAQLKSEYDDLCEPEQFGVVMSTVKMLRPRLTSILFKLTFEEHVNNIKPSIIAVTLACEELKKSESFKRLLELILLVGNYMNSGSRNAQSLGFKINFLCKIKDTKSADQKSTLLHFLAEICDEKYRDILKFPDELEHVESAGKVSAQILKSNLVAMEQSILHLEKNIKNFPPAESHHDKFVEKMMSFTQNAREQYDKLSTMHSNMLKLYESLGEYFIFDPNTVNMEEFFGDLNTFRTLFLEALKENHKRKEMEEKSRRAKLAKEKAEQEKLERQKKKKQLIDINKEGDETGVMDNLLEALQSGAAFRDRRKRIPRNPDNRRPPLERSRSRHNGAMSSK</sequence>
<organism>
    <name type="scientific">Mus musculus</name>
    <name type="common">Mouse</name>
    <dbReference type="NCBI Taxonomy" id="10090"/>
    <lineage>
        <taxon>Eukaryota</taxon>
        <taxon>Metazoa</taxon>
        <taxon>Chordata</taxon>
        <taxon>Craniata</taxon>
        <taxon>Vertebrata</taxon>
        <taxon>Euteleostomi</taxon>
        <taxon>Mammalia</taxon>
        <taxon>Eutheria</taxon>
        <taxon>Euarchontoglires</taxon>
        <taxon>Glires</taxon>
        <taxon>Rodentia</taxon>
        <taxon>Myomorpha</taxon>
        <taxon>Muroidea</taxon>
        <taxon>Muridae</taxon>
        <taxon>Murinae</taxon>
        <taxon>Mus</taxon>
        <taxon>Mus</taxon>
    </lineage>
</organism>
<proteinExistence type="evidence at protein level"/>
<accession>O70566</accession>
<accession>Q8C2G8</accession>
<name>DIAP2_MOUSE</name>
<keyword id="KW-0007">Acetylation</keyword>
<keyword id="KW-0175">Coiled coil</keyword>
<keyword id="KW-0217">Developmental protein</keyword>
<keyword id="KW-0221">Differentiation</keyword>
<keyword id="KW-0896">Oogenesis</keyword>
<keyword id="KW-1185">Reference proteome</keyword>
<keyword id="KW-0677">Repeat</keyword>
<reference key="1">
    <citation type="journal article" date="2005" name="Science">
        <title>The transcriptional landscape of the mammalian genome.</title>
        <authorList>
            <person name="Carninci P."/>
            <person name="Kasukawa T."/>
            <person name="Katayama S."/>
            <person name="Gough J."/>
            <person name="Frith M.C."/>
            <person name="Maeda N."/>
            <person name="Oyama R."/>
            <person name="Ravasi T."/>
            <person name="Lenhard B."/>
            <person name="Wells C."/>
            <person name="Kodzius R."/>
            <person name="Shimokawa K."/>
            <person name="Bajic V.B."/>
            <person name="Brenner S.E."/>
            <person name="Batalov S."/>
            <person name="Forrest A.R."/>
            <person name="Zavolan M."/>
            <person name="Davis M.J."/>
            <person name="Wilming L.G."/>
            <person name="Aidinis V."/>
            <person name="Allen J.E."/>
            <person name="Ambesi-Impiombato A."/>
            <person name="Apweiler R."/>
            <person name="Aturaliya R.N."/>
            <person name="Bailey T.L."/>
            <person name="Bansal M."/>
            <person name="Baxter L."/>
            <person name="Beisel K.W."/>
            <person name="Bersano T."/>
            <person name="Bono H."/>
            <person name="Chalk A.M."/>
            <person name="Chiu K.P."/>
            <person name="Choudhary V."/>
            <person name="Christoffels A."/>
            <person name="Clutterbuck D.R."/>
            <person name="Crowe M.L."/>
            <person name="Dalla E."/>
            <person name="Dalrymple B.P."/>
            <person name="de Bono B."/>
            <person name="Della Gatta G."/>
            <person name="di Bernardo D."/>
            <person name="Down T."/>
            <person name="Engstrom P."/>
            <person name="Fagiolini M."/>
            <person name="Faulkner G."/>
            <person name="Fletcher C.F."/>
            <person name="Fukushima T."/>
            <person name="Furuno M."/>
            <person name="Futaki S."/>
            <person name="Gariboldi M."/>
            <person name="Georgii-Hemming P."/>
            <person name="Gingeras T.R."/>
            <person name="Gojobori T."/>
            <person name="Green R.E."/>
            <person name="Gustincich S."/>
            <person name="Harbers M."/>
            <person name="Hayashi Y."/>
            <person name="Hensch T.K."/>
            <person name="Hirokawa N."/>
            <person name="Hill D."/>
            <person name="Huminiecki L."/>
            <person name="Iacono M."/>
            <person name="Ikeo K."/>
            <person name="Iwama A."/>
            <person name="Ishikawa T."/>
            <person name="Jakt M."/>
            <person name="Kanapin A."/>
            <person name="Katoh M."/>
            <person name="Kawasawa Y."/>
            <person name="Kelso J."/>
            <person name="Kitamura H."/>
            <person name="Kitano H."/>
            <person name="Kollias G."/>
            <person name="Krishnan S.P."/>
            <person name="Kruger A."/>
            <person name="Kummerfeld S.K."/>
            <person name="Kurochkin I.V."/>
            <person name="Lareau L.F."/>
            <person name="Lazarevic D."/>
            <person name="Lipovich L."/>
            <person name="Liu J."/>
            <person name="Liuni S."/>
            <person name="McWilliam S."/>
            <person name="Madan Babu M."/>
            <person name="Madera M."/>
            <person name="Marchionni L."/>
            <person name="Matsuda H."/>
            <person name="Matsuzawa S."/>
            <person name="Miki H."/>
            <person name="Mignone F."/>
            <person name="Miyake S."/>
            <person name="Morris K."/>
            <person name="Mottagui-Tabar S."/>
            <person name="Mulder N."/>
            <person name="Nakano N."/>
            <person name="Nakauchi H."/>
            <person name="Ng P."/>
            <person name="Nilsson R."/>
            <person name="Nishiguchi S."/>
            <person name="Nishikawa S."/>
            <person name="Nori F."/>
            <person name="Ohara O."/>
            <person name="Okazaki Y."/>
            <person name="Orlando V."/>
            <person name="Pang K.C."/>
            <person name="Pavan W.J."/>
            <person name="Pavesi G."/>
            <person name="Pesole G."/>
            <person name="Petrovsky N."/>
            <person name="Piazza S."/>
            <person name="Reed J."/>
            <person name="Reid J.F."/>
            <person name="Ring B.Z."/>
            <person name="Ringwald M."/>
            <person name="Rost B."/>
            <person name="Ruan Y."/>
            <person name="Salzberg S.L."/>
            <person name="Sandelin A."/>
            <person name="Schneider C."/>
            <person name="Schoenbach C."/>
            <person name="Sekiguchi K."/>
            <person name="Semple C.A."/>
            <person name="Seno S."/>
            <person name="Sessa L."/>
            <person name="Sheng Y."/>
            <person name="Shibata Y."/>
            <person name="Shimada H."/>
            <person name="Shimada K."/>
            <person name="Silva D."/>
            <person name="Sinclair B."/>
            <person name="Sperling S."/>
            <person name="Stupka E."/>
            <person name="Sugiura K."/>
            <person name="Sultana R."/>
            <person name="Takenaka Y."/>
            <person name="Taki K."/>
            <person name="Tammoja K."/>
            <person name="Tan S.L."/>
            <person name="Tang S."/>
            <person name="Taylor M.S."/>
            <person name="Tegner J."/>
            <person name="Teichmann S.A."/>
            <person name="Ueda H.R."/>
            <person name="van Nimwegen E."/>
            <person name="Verardo R."/>
            <person name="Wei C.L."/>
            <person name="Yagi K."/>
            <person name="Yamanishi H."/>
            <person name="Zabarovsky E."/>
            <person name="Zhu S."/>
            <person name="Zimmer A."/>
            <person name="Hide W."/>
            <person name="Bult C."/>
            <person name="Grimmond S.M."/>
            <person name="Teasdale R.D."/>
            <person name="Liu E.T."/>
            <person name="Brusic V."/>
            <person name="Quackenbush J."/>
            <person name="Wahlestedt C."/>
            <person name="Mattick J.S."/>
            <person name="Hume D.A."/>
            <person name="Kai C."/>
            <person name="Sasaki D."/>
            <person name="Tomaru Y."/>
            <person name="Fukuda S."/>
            <person name="Kanamori-Katayama M."/>
            <person name="Suzuki M."/>
            <person name="Aoki J."/>
            <person name="Arakawa T."/>
            <person name="Iida J."/>
            <person name="Imamura K."/>
            <person name="Itoh M."/>
            <person name="Kato T."/>
            <person name="Kawaji H."/>
            <person name="Kawagashira N."/>
            <person name="Kawashima T."/>
            <person name="Kojima M."/>
            <person name="Kondo S."/>
            <person name="Konno H."/>
            <person name="Nakano K."/>
            <person name="Ninomiya N."/>
            <person name="Nishio T."/>
            <person name="Okada M."/>
            <person name="Plessy C."/>
            <person name="Shibata K."/>
            <person name="Shiraki T."/>
            <person name="Suzuki S."/>
            <person name="Tagami M."/>
            <person name="Waki K."/>
            <person name="Watahiki A."/>
            <person name="Okamura-Oho Y."/>
            <person name="Suzuki H."/>
            <person name="Kawai J."/>
            <person name="Hayashizaki Y."/>
        </authorList>
    </citation>
    <scope>NUCLEOTIDE SEQUENCE [LARGE SCALE MRNA]</scope>
    <source>
        <strain>NOD</strain>
        <tissue>Thymus</tissue>
    </source>
</reference>
<reference key="2">
    <citation type="journal article" date="1998" name="Am. J. Hum. Genet.">
        <title>A human homologue of the Drosophila melanogaster diaphanous gene is disrupted in a patient with premature ovarian failure: evidence for conserved function in oogenesis and implications for human sterility.</title>
        <authorList>
            <person name="Bione S."/>
            <person name="Sala C."/>
            <person name="Manzini C."/>
            <person name="Arrigo G."/>
            <person name="Zuffardi O."/>
            <person name="Banfi S."/>
            <person name="Borsani G."/>
            <person name="Jonveaux P."/>
            <person name="Philippe C."/>
            <person name="Zuccotti M."/>
            <person name="Ballabio A."/>
            <person name="Toniolo D."/>
        </authorList>
    </citation>
    <scope>NUCLEOTIDE SEQUENCE [MRNA] OF 750-1098</scope>
    <source>
        <strain>BALB/cJ</strain>
    </source>
</reference>
<reference key="3">
    <citation type="journal article" date="2004" name="Nat. Cell Biol.">
        <title>EB1 and APC bind to mDia to stabilize microtubules downstream of Rho and promote cell migration.</title>
        <authorList>
            <person name="Wen Y."/>
            <person name="Eng C.H."/>
            <person name="Schmoranzer J."/>
            <person name="Cabrera-Poch N."/>
            <person name="Morris E.J.S."/>
            <person name="Chen M."/>
            <person name="Wallar B.J."/>
            <person name="Alberts A.S."/>
            <person name="Gundersen G.G."/>
        </authorList>
    </citation>
    <scope>INTERACTION WITH APC AND MAPRE1</scope>
</reference>
<reference key="4">
    <citation type="journal article" date="2010" name="Cell">
        <title>A tissue-specific atlas of mouse protein phosphorylation and expression.</title>
        <authorList>
            <person name="Huttlin E.L."/>
            <person name="Jedrychowski M.P."/>
            <person name="Elias J.E."/>
            <person name="Goswami T."/>
            <person name="Rad R."/>
            <person name="Beausoleil S.A."/>
            <person name="Villen J."/>
            <person name="Haas W."/>
            <person name="Sowa M.E."/>
            <person name="Gygi S.P."/>
        </authorList>
    </citation>
    <scope>IDENTIFICATION BY MASS SPECTROMETRY [LARGE SCALE ANALYSIS]</scope>
    <source>
        <tissue>Brain</tissue>
        <tissue>Brown adipose tissue</tissue>
        <tissue>Heart</tissue>
        <tissue>Kidney</tissue>
        <tissue>Liver</tissue>
        <tissue>Lung</tissue>
        <tissue>Pancreas</tissue>
        <tissue>Spleen</tissue>
        <tissue>Testis</tissue>
    </source>
</reference>
<feature type="chain" id="PRO_0000194896" description="Protein diaphanous homolog 2">
    <location>
        <begin position="1"/>
        <end position="1098"/>
    </location>
</feature>
<feature type="domain" description="GBD/FH3" evidence="5">
    <location>
        <begin position="90"/>
        <end position="463"/>
    </location>
</feature>
<feature type="domain" description="FH1">
    <location>
        <begin position="544"/>
        <end position="620"/>
    </location>
</feature>
<feature type="domain" description="FH2" evidence="6">
    <location>
        <begin position="625"/>
        <end position="1025"/>
    </location>
</feature>
<feature type="domain" description="DAD" evidence="4">
    <location>
        <begin position="1048"/>
        <end position="1078"/>
    </location>
</feature>
<feature type="region of interest" description="Disordered" evidence="7">
    <location>
        <begin position="1"/>
        <end position="62"/>
    </location>
</feature>
<feature type="region of interest" description="Disordered" evidence="7">
    <location>
        <begin position="537"/>
        <end position="565"/>
    </location>
</feature>
<feature type="region of interest" description="Disordered" evidence="7">
    <location>
        <begin position="578"/>
        <end position="611"/>
    </location>
</feature>
<feature type="region of interest" description="Disordered" evidence="7">
    <location>
        <begin position="679"/>
        <end position="699"/>
    </location>
</feature>
<feature type="region of interest" description="Disordered" evidence="7">
    <location>
        <begin position="1007"/>
        <end position="1047"/>
    </location>
</feature>
<feature type="region of interest" description="Disordered" evidence="7">
    <location>
        <begin position="1063"/>
        <end position="1098"/>
    </location>
</feature>
<feature type="coiled-coil region" evidence="3">
    <location>
        <begin position="375"/>
        <end position="416"/>
    </location>
</feature>
<feature type="coiled-coil region" evidence="3">
    <location>
        <begin position="490"/>
        <end position="539"/>
    </location>
</feature>
<feature type="coiled-coil region" evidence="3">
    <location>
        <begin position="999"/>
        <end position="1050"/>
    </location>
</feature>
<feature type="compositionally biased region" description="Basic and acidic residues" evidence="7">
    <location>
        <begin position="36"/>
        <end position="52"/>
    </location>
</feature>
<feature type="compositionally biased region" description="Pro residues" evidence="7">
    <location>
        <begin position="543"/>
        <end position="565"/>
    </location>
</feature>
<feature type="compositionally biased region" description="Pro residues" evidence="7">
    <location>
        <begin position="578"/>
        <end position="608"/>
    </location>
</feature>
<feature type="compositionally biased region" description="Basic and acidic residues" evidence="7">
    <location>
        <begin position="1007"/>
        <end position="1032"/>
    </location>
</feature>
<feature type="compositionally biased region" description="Basic and acidic residues" evidence="7">
    <location>
        <begin position="1075"/>
        <end position="1087"/>
    </location>
</feature>
<feature type="modified residue" description="N-acetylmethionine" evidence="2">
    <location>
        <position position="1"/>
    </location>
</feature>
<feature type="sequence conflict" description="In Ref. 2; CAA75871." evidence="9" ref="2">
    <original>KY</original>
    <variation>RD</variation>
    <location>
        <begin position="750"/>
        <end position="751"/>
    </location>
</feature>
<comment type="function">
    <text>May be involved in oogenesis.</text>
</comment>
<comment type="subunit">
    <text evidence="8">Interacts with MAPRE1 and APC.</text>
</comment>
<comment type="developmental stage">
    <text>Expressed in liver, heart, kidney, ovary and testis, at 16 dpc, P6 and P16.</text>
</comment>
<comment type="domain">
    <text evidence="1">The DAD domain regulates activation via by an autoinhibitory interaction with the GBD/FH3 domain. This autoinhibition is released upon competitive binding of an activated GTPase. The release of DAD allows the FH2 domain to then nucleate and elongate nonbranched actin filaments (By similarity).</text>
</comment>
<comment type="similarity">
    <text evidence="9">Belongs to the formin homology family. Diaphanous subfamily.</text>
</comment>
<comment type="sequence caution" evidence="9">
    <conflict type="miscellaneous discrepancy">
        <sequence resource="EMBL-CDS" id="BAC40476"/>
    </conflict>
    <text>Probable cloning artifact.</text>
</comment>
<evidence type="ECO:0000250" key="1"/>
<evidence type="ECO:0000250" key="2">
    <source>
        <dbReference type="UniProtKB" id="O60879"/>
    </source>
</evidence>
<evidence type="ECO:0000255" key="3"/>
<evidence type="ECO:0000255" key="4">
    <source>
        <dbReference type="PROSITE-ProRule" id="PRU00577"/>
    </source>
</evidence>
<evidence type="ECO:0000255" key="5">
    <source>
        <dbReference type="PROSITE-ProRule" id="PRU00579"/>
    </source>
</evidence>
<evidence type="ECO:0000255" key="6">
    <source>
        <dbReference type="PROSITE-ProRule" id="PRU00774"/>
    </source>
</evidence>
<evidence type="ECO:0000256" key="7">
    <source>
        <dbReference type="SAM" id="MobiDB-lite"/>
    </source>
</evidence>
<evidence type="ECO:0000269" key="8">
    <source>
    </source>
</evidence>
<evidence type="ECO:0000305" key="9"/>
<gene>
    <name type="primary">Diaph2</name>
    <name type="synonym">Diap2</name>
</gene>
<protein>
    <recommendedName>
        <fullName>Protein diaphanous homolog 2</fullName>
    </recommendedName>
    <alternativeName>
        <fullName>Diaphanous-related formin-2</fullName>
        <shortName>DRF2</shortName>
        <shortName>mDia3</shortName>
    </alternativeName>
</protein>